<accession>B7GR20</accession>
<accession>E8MJP8</accession>
<gene>
    <name evidence="1" type="primary">apt</name>
    <name type="ordered locus">Blon_1160</name>
    <name type="ordered locus">BLIJ_1187</name>
</gene>
<protein>
    <recommendedName>
        <fullName evidence="1">Adenine phosphoribosyltransferase</fullName>
        <shortName evidence="1">APRT</shortName>
        <ecNumber evidence="1">2.4.2.7</ecNumber>
    </recommendedName>
</protein>
<proteinExistence type="inferred from homology"/>
<evidence type="ECO:0000255" key="1">
    <source>
        <dbReference type="HAMAP-Rule" id="MF_00004"/>
    </source>
</evidence>
<reference key="1">
    <citation type="journal article" date="2008" name="Proc. Natl. Acad. Sci. U.S.A.">
        <title>The genome sequence of Bifidobacterium longum subsp. infantis reveals adaptations for milk utilization within the infant microbiome.</title>
        <authorList>
            <person name="Sela D.A."/>
            <person name="Chapman J."/>
            <person name="Adeuya A."/>
            <person name="Kim J.H."/>
            <person name="Chen F."/>
            <person name="Whitehead T.R."/>
            <person name="Lapidus A."/>
            <person name="Rokhsar D.S."/>
            <person name="Lebrilla C.B."/>
            <person name="German J.B."/>
            <person name="Price N.P."/>
            <person name="Richardson P.M."/>
            <person name="Mills D.A."/>
        </authorList>
    </citation>
    <scope>NUCLEOTIDE SEQUENCE [LARGE SCALE GENOMIC DNA]</scope>
    <source>
        <strain>ATCC 15697 / DSM 20088 / JCM 1222 / NCTC 11817 / S12</strain>
    </source>
</reference>
<reference key="2">
    <citation type="journal article" date="2011" name="Nature">
        <title>Bifidobacteria can protect from enteropathogenic infection through production of acetate.</title>
        <authorList>
            <person name="Fukuda S."/>
            <person name="Toh H."/>
            <person name="Hase K."/>
            <person name="Oshima K."/>
            <person name="Nakanishi Y."/>
            <person name="Yoshimura K."/>
            <person name="Tobe T."/>
            <person name="Clarke J.M."/>
            <person name="Topping D.L."/>
            <person name="Suzuki T."/>
            <person name="Taylor T.D."/>
            <person name="Itoh K."/>
            <person name="Kikuchi J."/>
            <person name="Morita H."/>
            <person name="Hattori M."/>
            <person name="Ohno H."/>
        </authorList>
    </citation>
    <scope>NUCLEOTIDE SEQUENCE [LARGE SCALE GENOMIC DNA]</scope>
    <source>
        <strain>ATCC 15697 / DSM 20088 / JCM 1222 / NCTC 11817 / S12</strain>
    </source>
</reference>
<keyword id="KW-0963">Cytoplasm</keyword>
<keyword id="KW-0328">Glycosyltransferase</keyword>
<keyword id="KW-0660">Purine salvage</keyword>
<keyword id="KW-0808">Transferase</keyword>
<organism>
    <name type="scientific">Bifidobacterium longum subsp. infantis (strain ATCC 15697 / DSM 20088 / JCM 1222 / NCTC 11817 / S12)</name>
    <dbReference type="NCBI Taxonomy" id="391904"/>
    <lineage>
        <taxon>Bacteria</taxon>
        <taxon>Bacillati</taxon>
        <taxon>Actinomycetota</taxon>
        <taxon>Actinomycetes</taxon>
        <taxon>Bifidobacteriales</taxon>
        <taxon>Bifidobacteriaceae</taxon>
        <taxon>Bifidobacterium</taxon>
    </lineage>
</organism>
<name>APT_BIFLS</name>
<feature type="chain" id="PRO_1000116232" description="Adenine phosphoribosyltransferase">
    <location>
        <begin position="1"/>
        <end position="193"/>
    </location>
</feature>
<sequence>MAQSDITIDALDKVGRQDAEYLVSLVRSIPGFPKEGIIFRDFIPVFADPKGLRILLEALEAALPVPASEFDSIAGLESRGFLFGPALAARMGKGFIAVRKAGKLPPETIGESYDLEYGSARVEIETDAVQAGERVLIVDDLIATGGTAKAATDLIDKVGGTVAGYGFVMRLEGLDGIDKLGGKPVSSLMAMPA</sequence>
<dbReference type="EC" id="2.4.2.7" evidence="1"/>
<dbReference type="EMBL" id="CP001095">
    <property type="protein sequence ID" value="ACJ52250.1"/>
    <property type="molecule type" value="Genomic_DNA"/>
</dbReference>
<dbReference type="EMBL" id="AP010889">
    <property type="protein sequence ID" value="BAJ68775.1"/>
    <property type="molecule type" value="Genomic_DNA"/>
</dbReference>
<dbReference type="RefSeq" id="WP_012577507.1">
    <property type="nucleotide sequence ID" value="NC_011593.1"/>
</dbReference>
<dbReference type="SMR" id="B7GR20"/>
<dbReference type="KEGG" id="bln:Blon_1160"/>
<dbReference type="KEGG" id="blon:BLIJ_1187"/>
<dbReference type="PATRIC" id="fig|391904.8.peg.1184"/>
<dbReference type="HOGENOM" id="CLU_063339_3_2_11"/>
<dbReference type="UniPathway" id="UPA00588">
    <property type="reaction ID" value="UER00646"/>
</dbReference>
<dbReference type="Proteomes" id="UP000001360">
    <property type="component" value="Chromosome"/>
</dbReference>
<dbReference type="GO" id="GO:0005737">
    <property type="term" value="C:cytoplasm"/>
    <property type="evidence" value="ECO:0007669"/>
    <property type="project" value="UniProtKB-SubCell"/>
</dbReference>
<dbReference type="GO" id="GO:0002055">
    <property type="term" value="F:adenine binding"/>
    <property type="evidence" value="ECO:0007669"/>
    <property type="project" value="TreeGrafter"/>
</dbReference>
<dbReference type="GO" id="GO:0003999">
    <property type="term" value="F:adenine phosphoribosyltransferase activity"/>
    <property type="evidence" value="ECO:0007669"/>
    <property type="project" value="UniProtKB-UniRule"/>
</dbReference>
<dbReference type="GO" id="GO:0016208">
    <property type="term" value="F:AMP binding"/>
    <property type="evidence" value="ECO:0007669"/>
    <property type="project" value="TreeGrafter"/>
</dbReference>
<dbReference type="GO" id="GO:0006168">
    <property type="term" value="P:adenine salvage"/>
    <property type="evidence" value="ECO:0007669"/>
    <property type="project" value="InterPro"/>
</dbReference>
<dbReference type="GO" id="GO:0044209">
    <property type="term" value="P:AMP salvage"/>
    <property type="evidence" value="ECO:0007669"/>
    <property type="project" value="UniProtKB-UniRule"/>
</dbReference>
<dbReference type="GO" id="GO:0006166">
    <property type="term" value="P:purine ribonucleoside salvage"/>
    <property type="evidence" value="ECO:0007669"/>
    <property type="project" value="UniProtKB-KW"/>
</dbReference>
<dbReference type="CDD" id="cd06223">
    <property type="entry name" value="PRTases_typeI"/>
    <property type="match status" value="1"/>
</dbReference>
<dbReference type="FunFam" id="3.40.50.2020:FF:000021">
    <property type="entry name" value="Adenine phosphoribosyltransferase"/>
    <property type="match status" value="1"/>
</dbReference>
<dbReference type="Gene3D" id="3.40.50.2020">
    <property type="match status" value="1"/>
</dbReference>
<dbReference type="HAMAP" id="MF_00004">
    <property type="entry name" value="Aden_phosphoribosyltr"/>
    <property type="match status" value="1"/>
</dbReference>
<dbReference type="InterPro" id="IPR005764">
    <property type="entry name" value="Ade_phspho_trans"/>
</dbReference>
<dbReference type="InterPro" id="IPR000836">
    <property type="entry name" value="PRibTrfase_dom"/>
</dbReference>
<dbReference type="InterPro" id="IPR029057">
    <property type="entry name" value="PRTase-like"/>
</dbReference>
<dbReference type="InterPro" id="IPR050054">
    <property type="entry name" value="UPRTase/APRTase"/>
</dbReference>
<dbReference type="NCBIfam" id="TIGR01090">
    <property type="entry name" value="apt"/>
    <property type="match status" value="1"/>
</dbReference>
<dbReference type="NCBIfam" id="NF002634">
    <property type="entry name" value="PRK02304.1-3"/>
    <property type="match status" value="1"/>
</dbReference>
<dbReference type="NCBIfam" id="NF002636">
    <property type="entry name" value="PRK02304.1-5"/>
    <property type="match status" value="1"/>
</dbReference>
<dbReference type="PANTHER" id="PTHR32315">
    <property type="entry name" value="ADENINE PHOSPHORIBOSYLTRANSFERASE"/>
    <property type="match status" value="1"/>
</dbReference>
<dbReference type="PANTHER" id="PTHR32315:SF3">
    <property type="entry name" value="ADENINE PHOSPHORIBOSYLTRANSFERASE"/>
    <property type="match status" value="1"/>
</dbReference>
<dbReference type="Pfam" id="PF00156">
    <property type="entry name" value="Pribosyltran"/>
    <property type="match status" value="1"/>
</dbReference>
<dbReference type="SUPFAM" id="SSF53271">
    <property type="entry name" value="PRTase-like"/>
    <property type="match status" value="1"/>
</dbReference>
<dbReference type="PROSITE" id="PS00103">
    <property type="entry name" value="PUR_PYR_PR_TRANSFER"/>
    <property type="match status" value="1"/>
</dbReference>
<comment type="function">
    <text evidence="1">Catalyzes a salvage reaction resulting in the formation of AMP, that is energically less costly than de novo synthesis.</text>
</comment>
<comment type="catalytic activity">
    <reaction evidence="1">
        <text>AMP + diphosphate = 5-phospho-alpha-D-ribose 1-diphosphate + adenine</text>
        <dbReference type="Rhea" id="RHEA:16609"/>
        <dbReference type="ChEBI" id="CHEBI:16708"/>
        <dbReference type="ChEBI" id="CHEBI:33019"/>
        <dbReference type="ChEBI" id="CHEBI:58017"/>
        <dbReference type="ChEBI" id="CHEBI:456215"/>
        <dbReference type="EC" id="2.4.2.7"/>
    </reaction>
</comment>
<comment type="pathway">
    <text evidence="1">Purine metabolism; AMP biosynthesis via salvage pathway; AMP from adenine: step 1/1.</text>
</comment>
<comment type="subunit">
    <text evidence="1">Homodimer.</text>
</comment>
<comment type="subcellular location">
    <subcellularLocation>
        <location evidence="1">Cytoplasm</location>
    </subcellularLocation>
</comment>
<comment type="similarity">
    <text evidence="1">Belongs to the purine/pyrimidine phosphoribosyltransferase family.</text>
</comment>